<proteinExistence type="inferred from homology"/>
<evidence type="ECO:0000255" key="1">
    <source>
        <dbReference type="HAMAP-Rule" id="MF_00009"/>
    </source>
</evidence>
<evidence type="ECO:0000256" key="2">
    <source>
        <dbReference type="SAM" id="MobiDB-lite"/>
    </source>
</evidence>
<comment type="function">
    <text evidence="1">Single strand-specific metallo-endoribonuclease involved in late-stage 70S ribosome quality control and in maturation of the 3' terminus of the 16S rRNA.</text>
</comment>
<comment type="cofactor">
    <cofactor evidence="1">
        <name>Zn(2+)</name>
        <dbReference type="ChEBI" id="CHEBI:29105"/>
    </cofactor>
    <text evidence="1">Binds 1 zinc ion.</text>
</comment>
<comment type="subcellular location">
    <subcellularLocation>
        <location evidence="1">Cytoplasm</location>
    </subcellularLocation>
</comment>
<comment type="similarity">
    <text evidence="1">Belongs to the endoribonuclease YbeY family.</text>
</comment>
<accession>Q1IKR2</accession>
<organism>
    <name type="scientific">Koribacter versatilis (strain Ellin345)</name>
    <dbReference type="NCBI Taxonomy" id="204669"/>
    <lineage>
        <taxon>Bacteria</taxon>
        <taxon>Pseudomonadati</taxon>
        <taxon>Acidobacteriota</taxon>
        <taxon>Terriglobia</taxon>
        <taxon>Terriglobales</taxon>
        <taxon>Candidatus Korobacteraceae</taxon>
        <taxon>Candidatus Korobacter</taxon>
    </lineage>
</organism>
<feature type="chain" id="PRO_0000284148" description="Endoribonuclease YbeY">
    <location>
        <begin position="1"/>
        <end position="152"/>
    </location>
</feature>
<feature type="region of interest" description="Disordered" evidence="2">
    <location>
        <begin position="132"/>
        <end position="152"/>
    </location>
</feature>
<feature type="compositionally biased region" description="Basic residues" evidence="2">
    <location>
        <begin position="141"/>
        <end position="152"/>
    </location>
</feature>
<feature type="binding site" evidence="1">
    <location>
        <position position="101"/>
    </location>
    <ligand>
        <name>Zn(2+)</name>
        <dbReference type="ChEBI" id="CHEBI:29105"/>
        <note>catalytic</note>
    </ligand>
</feature>
<feature type="binding site" evidence="1">
    <location>
        <position position="105"/>
    </location>
    <ligand>
        <name>Zn(2+)</name>
        <dbReference type="ChEBI" id="CHEBI:29105"/>
        <note>catalytic</note>
    </ligand>
</feature>
<feature type="binding site" evidence="1">
    <location>
        <position position="111"/>
    </location>
    <ligand>
        <name>Zn(2+)</name>
        <dbReference type="ChEBI" id="CHEBI:29105"/>
        <note>catalytic</note>
    </ligand>
</feature>
<keyword id="KW-0963">Cytoplasm</keyword>
<keyword id="KW-0255">Endonuclease</keyword>
<keyword id="KW-0378">Hydrolase</keyword>
<keyword id="KW-0479">Metal-binding</keyword>
<keyword id="KW-0540">Nuclease</keyword>
<keyword id="KW-1185">Reference proteome</keyword>
<keyword id="KW-0690">Ribosome biogenesis</keyword>
<keyword id="KW-0698">rRNA processing</keyword>
<keyword id="KW-0862">Zinc</keyword>
<name>YBEY_KORVE</name>
<dbReference type="EC" id="3.1.-.-" evidence="1"/>
<dbReference type="EMBL" id="CP000360">
    <property type="protein sequence ID" value="ABF42538.1"/>
    <property type="molecule type" value="Genomic_DNA"/>
</dbReference>
<dbReference type="SMR" id="Q1IKR2"/>
<dbReference type="STRING" id="204669.Acid345_3537"/>
<dbReference type="EnsemblBacteria" id="ABF42538">
    <property type="protein sequence ID" value="ABF42538"/>
    <property type="gene ID" value="Acid345_3537"/>
</dbReference>
<dbReference type="KEGG" id="aba:Acid345_3537"/>
<dbReference type="eggNOG" id="COG0319">
    <property type="taxonomic scope" value="Bacteria"/>
</dbReference>
<dbReference type="HOGENOM" id="CLU_106710_1_0_0"/>
<dbReference type="OrthoDB" id="9807740at2"/>
<dbReference type="Proteomes" id="UP000002432">
    <property type="component" value="Chromosome"/>
</dbReference>
<dbReference type="GO" id="GO:0005737">
    <property type="term" value="C:cytoplasm"/>
    <property type="evidence" value="ECO:0007669"/>
    <property type="project" value="UniProtKB-SubCell"/>
</dbReference>
<dbReference type="GO" id="GO:0004222">
    <property type="term" value="F:metalloendopeptidase activity"/>
    <property type="evidence" value="ECO:0007669"/>
    <property type="project" value="InterPro"/>
</dbReference>
<dbReference type="GO" id="GO:0004521">
    <property type="term" value="F:RNA endonuclease activity"/>
    <property type="evidence" value="ECO:0007669"/>
    <property type="project" value="UniProtKB-UniRule"/>
</dbReference>
<dbReference type="GO" id="GO:0008270">
    <property type="term" value="F:zinc ion binding"/>
    <property type="evidence" value="ECO:0007669"/>
    <property type="project" value="UniProtKB-UniRule"/>
</dbReference>
<dbReference type="GO" id="GO:0006364">
    <property type="term" value="P:rRNA processing"/>
    <property type="evidence" value="ECO:0007669"/>
    <property type="project" value="UniProtKB-UniRule"/>
</dbReference>
<dbReference type="Gene3D" id="3.40.390.30">
    <property type="entry name" value="Metalloproteases ('zincins'), catalytic domain"/>
    <property type="match status" value="1"/>
</dbReference>
<dbReference type="HAMAP" id="MF_00009">
    <property type="entry name" value="Endoribonucl_YbeY"/>
    <property type="match status" value="1"/>
</dbReference>
<dbReference type="InterPro" id="IPR023091">
    <property type="entry name" value="MetalPrtase_cat_dom_sf_prd"/>
</dbReference>
<dbReference type="InterPro" id="IPR002036">
    <property type="entry name" value="YbeY"/>
</dbReference>
<dbReference type="InterPro" id="IPR020549">
    <property type="entry name" value="YbeY_CS"/>
</dbReference>
<dbReference type="NCBIfam" id="TIGR00043">
    <property type="entry name" value="rRNA maturation RNase YbeY"/>
    <property type="match status" value="1"/>
</dbReference>
<dbReference type="PANTHER" id="PTHR46986">
    <property type="entry name" value="ENDORIBONUCLEASE YBEY, CHLOROPLASTIC"/>
    <property type="match status" value="1"/>
</dbReference>
<dbReference type="PANTHER" id="PTHR46986:SF1">
    <property type="entry name" value="ENDORIBONUCLEASE YBEY, CHLOROPLASTIC"/>
    <property type="match status" value="1"/>
</dbReference>
<dbReference type="Pfam" id="PF02130">
    <property type="entry name" value="YbeY"/>
    <property type="match status" value="1"/>
</dbReference>
<dbReference type="SUPFAM" id="SSF55486">
    <property type="entry name" value="Metalloproteases ('zincins'), catalytic domain"/>
    <property type="match status" value="1"/>
</dbReference>
<dbReference type="PROSITE" id="PS01306">
    <property type="entry name" value="UPF0054"/>
    <property type="match status" value="1"/>
</dbReference>
<protein>
    <recommendedName>
        <fullName evidence="1">Endoribonuclease YbeY</fullName>
        <ecNumber evidence="1">3.1.-.-</ecNumber>
    </recommendedName>
</protein>
<sequence>MIILKKKLAGVSEQSLSLFLTRARKAAGVRGQVQVLVTSSDELRGLNRRFRRKDKATDVLSFPAIVDGEAGDIAISSDIASEYAYELGHSLDEELRILILHGVLHLAGHDHERDKGEMEALESELRDKLKLPSSLIERTTKPAKKAAKRKKR</sequence>
<gene>
    <name evidence="1" type="primary">ybeY</name>
    <name type="ordered locus">Acid345_3537</name>
</gene>
<reference key="1">
    <citation type="journal article" date="2009" name="Appl. Environ. Microbiol.">
        <title>Three genomes from the phylum Acidobacteria provide insight into the lifestyles of these microorganisms in soils.</title>
        <authorList>
            <person name="Ward N.L."/>
            <person name="Challacombe J.F."/>
            <person name="Janssen P.H."/>
            <person name="Henrissat B."/>
            <person name="Coutinho P.M."/>
            <person name="Wu M."/>
            <person name="Xie G."/>
            <person name="Haft D.H."/>
            <person name="Sait M."/>
            <person name="Badger J."/>
            <person name="Barabote R.D."/>
            <person name="Bradley B."/>
            <person name="Brettin T.S."/>
            <person name="Brinkac L.M."/>
            <person name="Bruce D."/>
            <person name="Creasy T."/>
            <person name="Daugherty S.C."/>
            <person name="Davidsen T.M."/>
            <person name="DeBoy R.T."/>
            <person name="Detter J.C."/>
            <person name="Dodson R.J."/>
            <person name="Durkin A.S."/>
            <person name="Ganapathy A."/>
            <person name="Gwinn-Giglio M."/>
            <person name="Han C.S."/>
            <person name="Khouri H."/>
            <person name="Kiss H."/>
            <person name="Kothari S.P."/>
            <person name="Madupu R."/>
            <person name="Nelson K.E."/>
            <person name="Nelson W.C."/>
            <person name="Paulsen I."/>
            <person name="Penn K."/>
            <person name="Ren Q."/>
            <person name="Rosovitz M.J."/>
            <person name="Selengut J.D."/>
            <person name="Shrivastava S."/>
            <person name="Sullivan S.A."/>
            <person name="Tapia R."/>
            <person name="Thompson L.S."/>
            <person name="Watkins K.L."/>
            <person name="Yang Q."/>
            <person name="Yu C."/>
            <person name="Zafar N."/>
            <person name="Zhou L."/>
            <person name="Kuske C.R."/>
        </authorList>
    </citation>
    <scope>NUCLEOTIDE SEQUENCE [LARGE SCALE GENOMIC DNA]</scope>
    <source>
        <strain>Ellin345</strain>
    </source>
</reference>